<keyword id="KW-0217">Developmental protein</keyword>
<keyword id="KW-0238">DNA-binding</keyword>
<keyword id="KW-0371">Homeobox</keyword>
<keyword id="KW-0539">Nucleus</keyword>
<keyword id="KW-1185">Reference proteome</keyword>
<keyword id="KW-0804">Transcription</keyword>
<keyword id="KW-0805">Transcription regulation</keyword>
<proteinExistence type="inferred from homology"/>
<organism>
    <name type="scientific">Mus musculus</name>
    <name type="common">Mouse</name>
    <dbReference type="NCBI Taxonomy" id="10090"/>
    <lineage>
        <taxon>Eukaryota</taxon>
        <taxon>Metazoa</taxon>
        <taxon>Chordata</taxon>
        <taxon>Craniata</taxon>
        <taxon>Vertebrata</taxon>
        <taxon>Euteleostomi</taxon>
        <taxon>Mammalia</taxon>
        <taxon>Eutheria</taxon>
        <taxon>Euarchontoglires</taxon>
        <taxon>Glires</taxon>
        <taxon>Rodentia</taxon>
        <taxon>Myomorpha</taxon>
        <taxon>Muroidea</taxon>
        <taxon>Muridae</taxon>
        <taxon>Murinae</taxon>
        <taxon>Mus</taxon>
        <taxon>Mus</taxon>
    </lineage>
</organism>
<gene>
    <name type="primary">Hoxd8</name>
    <name type="synonym">Hox-4.3</name>
    <name type="synonym">Hoxd-8</name>
</gene>
<comment type="function">
    <text>Sequence-specific transcription factor which is part of a developmental regulatory system that provides cells with specific positional identities on the anterior-posterior axis.</text>
</comment>
<comment type="subcellular location">
    <subcellularLocation>
        <location>Nucleus</location>
    </subcellularLocation>
</comment>
<comment type="similarity">
    <text evidence="3">Belongs to the Antp homeobox family.</text>
</comment>
<reference key="1">
    <citation type="journal article" date="1990" name="Development">
        <title>Primary structure and embryonic expression pattern of the mouse Hox-4.3 homeobox gene.</title>
        <authorList>
            <person name="Izpisua-Belmonte J.-C."/>
            <person name="Dolle P."/>
            <person name="Renucci A."/>
            <person name="Zappavigna V."/>
            <person name="Falkenstein H."/>
            <person name="Duboule D."/>
        </authorList>
    </citation>
    <scope>NUCLEOTIDE SEQUENCE [GENOMIC DNA]</scope>
</reference>
<reference key="2">
    <citation type="journal article" date="2009" name="PLoS Biol.">
        <title>Lineage-specific biology revealed by a finished genome assembly of the mouse.</title>
        <authorList>
            <person name="Church D.M."/>
            <person name="Goodstadt L."/>
            <person name="Hillier L.W."/>
            <person name="Zody M.C."/>
            <person name="Goldstein S."/>
            <person name="She X."/>
            <person name="Bult C.J."/>
            <person name="Agarwala R."/>
            <person name="Cherry J.L."/>
            <person name="DiCuccio M."/>
            <person name="Hlavina W."/>
            <person name="Kapustin Y."/>
            <person name="Meric P."/>
            <person name="Maglott D."/>
            <person name="Birtle Z."/>
            <person name="Marques A.C."/>
            <person name="Graves T."/>
            <person name="Zhou S."/>
            <person name="Teague B."/>
            <person name="Potamousis K."/>
            <person name="Churas C."/>
            <person name="Place M."/>
            <person name="Herschleb J."/>
            <person name="Runnheim R."/>
            <person name="Forrest D."/>
            <person name="Amos-Landgraf J."/>
            <person name="Schwartz D.C."/>
            <person name="Cheng Z."/>
            <person name="Lindblad-Toh K."/>
            <person name="Eichler E.E."/>
            <person name="Ponting C.P."/>
        </authorList>
    </citation>
    <scope>NUCLEOTIDE SEQUENCE [LARGE SCALE GENOMIC DNA]</scope>
    <source>
        <strain>C57BL/6J</strain>
    </source>
</reference>
<reference key="3">
    <citation type="journal article" date="1991" name="Biochim. Biophys. Acta">
        <title>Sequence analysis of the homeobox-containing exon of the murine Hox-4.3 homeogene.</title>
        <authorList>
            <person name="Sadoul R."/>
            <person name="Featherstone M."/>
        </authorList>
    </citation>
    <scope>NUCLEOTIDE SEQUENCE [GENOMIC DNA] OF 191-289</scope>
</reference>
<reference key="4">
    <citation type="journal article" date="1991" name="Proc. Natl. Acad. Sci. U.S.A.">
        <title>Identification of 10 murine homeobox genes.</title>
        <authorList>
            <person name="Singh G."/>
            <person name="Kaur S."/>
            <person name="Stock J.L."/>
            <person name="Jenkins N.A."/>
            <person name="Gilbert D.J."/>
            <person name="Copeland N.G."/>
            <person name="Potter S.S."/>
        </authorList>
    </citation>
    <scope>NUCLEOTIDE SEQUENCE [GENOMIC DNA] OF 195-254</scope>
</reference>
<reference key="5">
    <citation type="journal article" date="1992" name="Proc. Natl. Acad. Sci. U.S.A.">
        <title>Hox-1.11 and Hox-4.9 homeobox genes.</title>
        <authorList>
            <person name="Nazarali A."/>
            <person name="Kim Y."/>
            <person name="Nirenberg M."/>
        </authorList>
    </citation>
    <scope>NUCLEOTIDE SEQUENCE [GENOMIC DNA] OF 192-260</scope>
</reference>
<dbReference type="EMBL" id="X56561">
    <property type="protein sequence ID" value="CAA39911.1"/>
    <property type="molecule type" value="Genomic_DNA"/>
</dbReference>
<dbReference type="EMBL" id="AL928644">
    <property type="status" value="NOT_ANNOTATED_CDS"/>
    <property type="molecule type" value="Genomic_DNA"/>
</dbReference>
<dbReference type="EMBL" id="M87803">
    <property type="protein sequence ID" value="AAA37852.1"/>
    <property type="molecule type" value="Genomic_DNA"/>
</dbReference>
<dbReference type="CCDS" id="CCDS16143.1"/>
<dbReference type="PIR" id="A43562">
    <property type="entry name" value="A43562"/>
</dbReference>
<dbReference type="PIR" id="S16177">
    <property type="entry name" value="A41605"/>
</dbReference>
<dbReference type="RefSeq" id="NP_032302.2">
    <property type="nucleotide sequence ID" value="NM_008276.3"/>
</dbReference>
<dbReference type="SMR" id="P23463"/>
<dbReference type="FunCoup" id="P23463">
    <property type="interactions" value="870"/>
</dbReference>
<dbReference type="STRING" id="10090.ENSMUSP00000019749"/>
<dbReference type="PhosphoSitePlus" id="P23463"/>
<dbReference type="PaxDb" id="10090-ENSMUSP00000019749"/>
<dbReference type="ProteomicsDB" id="266936"/>
<dbReference type="Antibodypedia" id="33911">
    <property type="antibodies" value="295 antibodies from 30 providers"/>
</dbReference>
<dbReference type="DNASU" id="15437"/>
<dbReference type="Ensembl" id="ENSMUST00000019749.4">
    <property type="protein sequence ID" value="ENSMUSP00000019749.4"/>
    <property type="gene ID" value="ENSMUSG00000027102.5"/>
</dbReference>
<dbReference type="GeneID" id="15437"/>
<dbReference type="KEGG" id="mmu:15437"/>
<dbReference type="UCSC" id="uc008kea.2">
    <property type="organism name" value="mouse"/>
</dbReference>
<dbReference type="AGR" id="MGI:96209"/>
<dbReference type="CTD" id="3234"/>
<dbReference type="MGI" id="MGI:96209">
    <property type="gene designation" value="Hoxd8"/>
</dbReference>
<dbReference type="VEuPathDB" id="HostDB:ENSMUSG00000027102"/>
<dbReference type="eggNOG" id="KOG0489">
    <property type="taxonomic scope" value="Eukaryota"/>
</dbReference>
<dbReference type="GeneTree" id="ENSGT00940000161653"/>
<dbReference type="HOGENOM" id="CLU_061398_1_0_1"/>
<dbReference type="InParanoid" id="P23463"/>
<dbReference type="OMA" id="CHREPAK"/>
<dbReference type="OrthoDB" id="6159439at2759"/>
<dbReference type="PhylomeDB" id="P23463"/>
<dbReference type="TreeFam" id="TF316310"/>
<dbReference type="BioGRID-ORCS" id="15437">
    <property type="hits" value="3 hits in 78 CRISPR screens"/>
</dbReference>
<dbReference type="ChiTaRS" id="Hoxd8">
    <property type="organism name" value="mouse"/>
</dbReference>
<dbReference type="PRO" id="PR:P23463"/>
<dbReference type="Proteomes" id="UP000000589">
    <property type="component" value="Chromosome 2"/>
</dbReference>
<dbReference type="RNAct" id="P23463">
    <property type="molecule type" value="protein"/>
</dbReference>
<dbReference type="Bgee" id="ENSMUSG00000027102">
    <property type="expression patterns" value="Expressed in embryonic post-anal tail and 166 other cell types or tissues"/>
</dbReference>
<dbReference type="ExpressionAtlas" id="P23463">
    <property type="expression patterns" value="baseline and differential"/>
</dbReference>
<dbReference type="GO" id="GO:0005634">
    <property type="term" value="C:nucleus"/>
    <property type="evidence" value="ECO:0007669"/>
    <property type="project" value="UniProtKB-SubCell"/>
</dbReference>
<dbReference type="GO" id="GO:0001228">
    <property type="term" value="F:DNA-binding transcription activator activity, RNA polymerase II-specific"/>
    <property type="evidence" value="ECO:0007669"/>
    <property type="project" value="Ensembl"/>
</dbReference>
<dbReference type="GO" id="GO:0000977">
    <property type="term" value="F:RNA polymerase II transcription regulatory region sequence-specific DNA binding"/>
    <property type="evidence" value="ECO:0007669"/>
    <property type="project" value="Ensembl"/>
</dbReference>
<dbReference type="GO" id="GO:0009952">
    <property type="term" value="P:anterior/posterior pattern specification"/>
    <property type="evidence" value="ECO:0000315"/>
    <property type="project" value="MGI"/>
</dbReference>
<dbReference type="GO" id="GO:0000122">
    <property type="term" value="P:negative regulation of transcription by RNA polymerase II"/>
    <property type="evidence" value="ECO:0000316"/>
    <property type="project" value="MGI"/>
</dbReference>
<dbReference type="GO" id="GO:0048705">
    <property type="term" value="P:skeletal system morphogenesis"/>
    <property type="evidence" value="ECO:0000315"/>
    <property type="project" value="MGI"/>
</dbReference>
<dbReference type="CDD" id="cd00086">
    <property type="entry name" value="homeodomain"/>
    <property type="match status" value="1"/>
</dbReference>
<dbReference type="FunFam" id="1.10.10.60:FF:000072">
    <property type="entry name" value="Homeobox protein Hox-B8"/>
    <property type="match status" value="1"/>
</dbReference>
<dbReference type="Gene3D" id="1.10.10.60">
    <property type="entry name" value="Homeodomain-like"/>
    <property type="match status" value="1"/>
</dbReference>
<dbReference type="InterPro" id="IPR050948">
    <property type="entry name" value="Antp_homeobox_TF"/>
</dbReference>
<dbReference type="InterPro" id="IPR001356">
    <property type="entry name" value="HD"/>
</dbReference>
<dbReference type="InterPro" id="IPR020479">
    <property type="entry name" value="HD_metazoa"/>
</dbReference>
<dbReference type="InterPro" id="IPR001827">
    <property type="entry name" value="Homeobox_Antennapedia_CS"/>
</dbReference>
<dbReference type="InterPro" id="IPR017970">
    <property type="entry name" value="Homeobox_CS"/>
</dbReference>
<dbReference type="InterPro" id="IPR009057">
    <property type="entry name" value="Homeodomain-like_sf"/>
</dbReference>
<dbReference type="PANTHER" id="PTHR46166">
    <property type="entry name" value="HOMEOBOX DOMAIN-CONTAINING PROTEIN"/>
    <property type="match status" value="1"/>
</dbReference>
<dbReference type="PANTHER" id="PTHR46166:SF1">
    <property type="entry name" value="HOMEOBOX PROTEIN HOX-D8"/>
    <property type="match status" value="1"/>
</dbReference>
<dbReference type="Pfam" id="PF00046">
    <property type="entry name" value="Homeodomain"/>
    <property type="match status" value="1"/>
</dbReference>
<dbReference type="PRINTS" id="PR00024">
    <property type="entry name" value="HOMEOBOX"/>
</dbReference>
<dbReference type="SMART" id="SM00389">
    <property type="entry name" value="HOX"/>
    <property type="match status" value="1"/>
</dbReference>
<dbReference type="SUPFAM" id="SSF46689">
    <property type="entry name" value="Homeodomain-like"/>
    <property type="match status" value="1"/>
</dbReference>
<dbReference type="PROSITE" id="PS00032">
    <property type="entry name" value="ANTENNAPEDIA"/>
    <property type="match status" value="1"/>
</dbReference>
<dbReference type="PROSITE" id="PS00027">
    <property type="entry name" value="HOMEOBOX_1"/>
    <property type="match status" value="1"/>
</dbReference>
<dbReference type="PROSITE" id="PS50071">
    <property type="entry name" value="HOMEOBOX_2"/>
    <property type="match status" value="1"/>
</dbReference>
<accession>P23463</accession>
<accession>A2ASN2</accession>
<sequence length="289" mass="31363">MSSYFVNPLYSKYKAAAAAAAAAAAAAAGEAINPTYYDCHFAPEVSGRHAAALQLYGNSAAGFPHAHPHPHPHPSPPPGCGGGGGPGPGQDYFHAGAGSPTAAYQAAPPPPHPPPPPPPPPCGGIACHGEPAKFYGYDNLQRQPIFTTQQEAELVQYPDCKSSSGNIGEDPDHLNQSSSPSQMFPWMRPQAAPGRRRGRQTYSRFQTLELEKEFLFNPYLTRKRRIEVSHTLALTERQVKIWFQNRRMKWKKENNKDKFPASRPEAKDGDPKKEVSGLEEDGAEGCPTN</sequence>
<feature type="chain" id="PRO_0000200217" description="Homeobox protein Hox-D8">
    <location>
        <begin position="1"/>
        <end position="289"/>
    </location>
</feature>
<feature type="DNA-binding region" description="Homeobox" evidence="1">
    <location>
        <begin position="195"/>
        <end position="254"/>
    </location>
</feature>
<feature type="region of interest" description="Disordered" evidence="2">
    <location>
        <begin position="62"/>
        <end position="125"/>
    </location>
</feature>
<feature type="region of interest" description="Disordered" evidence="2">
    <location>
        <begin position="162"/>
        <end position="184"/>
    </location>
</feature>
<feature type="region of interest" description="Disordered" evidence="2">
    <location>
        <begin position="252"/>
        <end position="289"/>
    </location>
</feature>
<feature type="short sequence motif" description="Antp-type hexapeptide">
    <location>
        <begin position="183"/>
        <end position="188"/>
    </location>
</feature>
<feature type="compositionally biased region" description="Pro residues" evidence="2">
    <location>
        <begin position="107"/>
        <end position="122"/>
    </location>
</feature>
<feature type="compositionally biased region" description="Basic and acidic residues" evidence="2">
    <location>
        <begin position="252"/>
        <end position="276"/>
    </location>
</feature>
<evidence type="ECO:0000255" key="1">
    <source>
        <dbReference type="PROSITE-ProRule" id="PRU00108"/>
    </source>
</evidence>
<evidence type="ECO:0000256" key="2">
    <source>
        <dbReference type="SAM" id="MobiDB-lite"/>
    </source>
</evidence>
<evidence type="ECO:0000305" key="3"/>
<protein>
    <recommendedName>
        <fullName>Homeobox protein Hox-D8</fullName>
    </recommendedName>
    <alternativeName>
        <fullName>Homeobox protein Hox-4.3</fullName>
    </alternativeName>
    <alternativeName>
        <fullName>Homeobox protein Hox-5.4</fullName>
    </alternativeName>
</protein>
<name>HXD8_MOUSE</name>